<gene>
    <name evidence="1" type="primary">rpl14</name>
    <name type="ORF">9311107</name>
</gene>
<reference key="1">
    <citation type="journal article" date="2004" name="Plant Physiol.">
        <title>A comparison of rice chloroplast genomes.</title>
        <authorList>
            <person name="Tang J."/>
            <person name="Xia H."/>
            <person name="Cao M."/>
            <person name="Zhang X."/>
            <person name="Zeng W."/>
            <person name="Hu S."/>
            <person name="Tong W."/>
            <person name="Wang J."/>
            <person name="Wang J."/>
            <person name="Yu J."/>
            <person name="Yang H."/>
            <person name="Zhu L."/>
        </authorList>
    </citation>
    <scope>NUCLEOTIDE SEQUENCE [LARGE SCALE GENOMIC DNA]</scope>
    <source>
        <strain>cv. 93-11</strain>
    </source>
</reference>
<name>RK14_ORYSI</name>
<organism>
    <name type="scientific">Oryza sativa subsp. indica</name>
    <name type="common">Rice</name>
    <dbReference type="NCBI Taxonomy" id="39946"/>
    <lineage>
        <taxon>Eukaryota</taxon>
        <taxon>Viridiplantae</taxon>
        <taxon>Streptophyta</taxon>
        <taxon>Embryophyta</taxon>
        <taxon>Tracheophyta</taxon>
        <taxon>Spermatophyta</taxon>
        <taxon>Magnoliopsida</taxon>
        <taxon>Liliopsida</taxon>
        <taxon>Poales</taxon>
        <taxon>Poaceae</taxon>
        <taxon>BOP clade</taxon>
        <taxon>Oryzoideae</taxon>
        <taxon>Oryzeae</taxon>
        <taxon>Oryzinae</taxon>
        <taxon>Oryza</taxon>
        <taxon>Oryza sativa</taxon>
    </lineage>
</organism>
<evidence type="ECO:0000255" key="1">
    <source>
        <dbReference type="HAMAP-Rule" id="MF_01367"/>
    </source>
</evidence>
<evidence type="ECO:0000305" key="2"/>
<protein>
    <recommendedName>
        <fullName evidence="1">Large ribosomal subunit protein uL14c</fullName>
    </recommendedName>
    <alternativeName>
        <fullName evidence="2">50S ribosomal protein L14, chloroplastic</fullName>
    </alternativeName>
</protein>
<keyword id="KW-0150">Chloroplast</keyword>
<keyword id="KW-0934">Plastid</keyword>
<keyword id="KW-1185">Reference proteome</keyword>
<keyword id="KW-0687">Ribonucleoprotein</keyword>
<keyword id="KW-0689">Ribosomal protein</keyword>
<keyword id="KW-0694">RNA-binding</keyword>
<keyword id="KW-0699">rRNA-binding</keyword>
<comment type="function">
    <text evidence="1">Binds to 23S rRNA.</text>
</comment>
<comment type="subunit">
    <text evidence="1">Part of the 50S ribosomal subunit.</text>
</comment>
<comment type="subcellular location">
    <subcellularLocation>
        <location>Plastid</location>
        <location>Chloroplast</location>
    </subcellularLocation>
</comment>
<comment type="similarity">
    <text evidence="1">Belongs to the universal ribosomal protein uL14 family.</text>
</comment>
<proteinExistence type="inferred from homology"/>
<dbReference type="EMBL" id="AY522329">
    <property type="protein sequence ID" value="AAS46080.1"/>
    <property type="molecule type" value="Genomic_DNA"/>
</dbReference>
<dbReference type="RefSeq" id="YP_009161400.1">
    <property type="nucleotide sequence ID" value="NC_027678.1"/>
</dbReference>
<dbReference type="RefSeq" id="YP_654240.1">
    <property type="nucleotide sequence ID" value="NC_008155.1"/>
</dbReference>
<dbReference type="SMR" id="P0C439"/>
<dbReference type="STRING" id="39946.P0C439"/>
<dbReference type="GeneID" id="4126930"/>
<dbReference type="Proteomes" id="UP000007015">
    <property type="component" value="Chloroplast"/>
</dbReference>
<dbReference type="GO" id="GO:0009507">
    <property type="term" value="C:chloroplast"/>
    <property type="evidence" value="ECO:0007669"/>
    <property type="project" value="UniProtKB-SubCell"/>
</dbReference>
<dbReference type="GO" id="GO:0022625">
    <property type="term" value="C:cytosolic large ribosomal subunit"/>
    <property type="evidence" value="ECO:0007669"/>
    <property type="project" value="TreeGrafter"/>
</dbReference>
<dbReference type="GO" id="GO:0009536">
    <property type="term" value="C:plastid"/>
    <property type="evidence" value="ECO:0000305"/>
    <property type="project" value="Gramene"/>
</dbReference>
<dbReference type="GO" id="GO:0070180">
    <property type="term" value="F:large ribosomal subunit rRNA binding"/>
    <property type="evidence" value="ECO:0007669"/>
    <property type="project" value="TreeGrafter"/>
</dbReference>
<dbReference type="GO" id="GO:0003735">
    <property type="term" value="F:structural constituent of ribosome"/>
    <property type="evidence" value="ECO:0007669"/>
    <property type="project" value="InterPro"/>
</dbReference>
<dbReference type="GO" id="GO:0006412">
    <property type="term" value="P:translation"/>
    <property type="evidence" value="ECO:0007669"/>
    <property type="project" value="UniProtKB-UniRule"/>
</dbReference>
<dbReference type="CDD" id="cd00337">
    <property type="entry name" value="Ribosomal_uL14"/>
    <property type="match status" value="1"/>
</dbReference>
<dbReference type="FunFam" id="2.40.150.20:FF:000002">
    <property type="entry name" value="50S ribosomal protein L14, chloroplastic"/>
    <property type="match status" value="1"/>
</dbReference>
<dbReference type="Gene3D" id="2.40.150.20">
    <property type="entry name" value="Ribosomal protein L14"/>
    <property type="match status" value="1"/>
</dbReference>
<dbReference type="HAMAP" id="MF_01367">
    <property type="entry name" value="Ribosomal_uL14"/>
    <property type="match status" value="1"/>
</dbReference>
<dbReference type="InterPro" id="IPR000218">
    <property type="entry name" value="Ribosomal_uL14"/>
</dbReference>
<dbReference type="InterPro" id="IPR005745">
    <property type="entry name" value="Ribosomal_uL14_bac-type"/>
</dbReference>
<dbReference type="InterPro" id="IPR019972">
    <property type="entry name" value="Ribosomal_uL14_CS"/>
</dbReference>
<dbReference type="InterPro" id="IPR036853">
    <property type="entry name" value="Ribosomal_uL14_sf"/>
</dbReference>
<dbReference type="NCBIfam" id="TIGR01067">
    <property type="entry name" value="rplN_bact"/>
    <property type="match status" value="1"/>
</dbReference>
<dbReference type="PANTHER" id="PTHR11761">
    <property type="entry name" value="50S/60S RIBOSOMAL PROTEIN L14/L23"/>
    <property type="match status" value="1"/>
</dbReference>
<dbReference type="PANTHER" id="PTHR11761:SF3">
    <property type="entry name" value="LARGE RIBOSOMAL SUBUNIT PROTEIN UL14M"/>
    <property type="match status" value="1"/>
</dbReference>
<dbReference type="Pfam" id="PF00238">
    <property type="entry name" value="Ribosomal_L14"/>
    <property type="match status" value="1"/>
</dbReference>
<dbReference type="SMART" id="SM01374">
    <property type="entry name" value="Ribosomal_L14"/>
    <property type="match status" value="1"/>
</dbReference>
<dbReference type="SUPFAM" id="SSF50193">
    <property type="entry name" value="Ribosomal protein L14"/>
    <property type="match status" value="1"/>
</dbReference>
<dbReference type="PROSITE" id="PS00049">
    <property type="entry name" value="RIBOSOMAL_L14"/>
    <property type="match status" value="1"/>
</dbReference>
<feature type="chain" id="PRO_0000290041" description="Large ribosomal subunit protein uL14c">
    <location>
        <begin position="1"/>
        <end position="123"/>
    </location>
</feature>
<sequence length="123" mass="13565">MIQPQTLLNVADNSGARKLMCIRVIGAASNQRYARIGDVIVAVIKDAVPQMPLERSEVIRAVIVRTCKEFKCEDGIIIRYDDNAAVIIDQKGNPKGTRVFGAIAEELRELNFTKIVSLAPEVL</sequence>
<geneLocation type="chloroplast"/>
<accession>P0C439</accession>
<accession>P12137</accession>
<accession>Q6QY49</accession>